<comment type="function">
    <text evidence="1">Catalyzes a salvage reaction resulting in the formation of AMP, that is energically less costly than de novo synthesis.</text>
</comment>
<comment type="catalytic activity">
    <reaction evidence="1">
        <text>AMP + diphosphate = 5-phospho-alpha-D-ribose 1-diphosphate + adenine</text>
        <dbReference type="Rhea" id="RHEA:16609"/>
        <dbReference type="ChEBI" id="CHEBI:16708"/>
        <dbReference type="ChEBI" id="CHEBI:33019"/>
        <dbReference type="ChEBI" id="CHEBI:58017"/>
        <dbReference type="ChEBI" id="CHEBI:456215"/>
        <dbReference type="EC" id="2.4.2.7"/>
    </reaction>
</comment>
<comment type="pathway">
    <text evidence="1">Purine metabolism; AMP biosynthesis via salvage pathway; AMP from adenine: step 1/1.</text>
</comment>
<comment type="subunit">
    <text evidence="1">Homodimer.</text>
</comment>
<comment type="subcellular location">
    <subcellularLocation>
        <location evidence="1">Cytoplasm</location>
    </subcellularLocation>
</comment>
<comment type="similarity">
    <text evidence="1">Belongs to the purine/pyrimidine phosphoribosyltransferase family.</text>
</comment>
<keyword id="KW-0963">Cytoplasm</keyword>
<keyword id="KW-0328">Glycosyltransferase</keyword>
<keyword id="KW-0660">Purine salvage</keyword>
<keyword id="KW-1185">Reference proteome</keyword>
<keyword id="KW-0808">Transferase</keyword>
<accession>Q9KDH2</accession>
<feature type="chain" id="PRO_0000149350" description="Adenine phosphoribosyltransferase">
    <location>
        <begin position="1"/>
        <end position="171"/>
    </location>
</feature>
<dbReference type="EC" id="2.4.2.7" evidence="1"/>
<dbReference type="EMBL" id="BA000004">
    <property type="protein sequence ID" value="BAB04960.1"/>
    <property type="molecule type" value="Genomic_DNA"/>
</dbReference>
<dbReference type="PIR" id="A83805">
    <property type="entry name" value="A83805"/>
</dbReference>
<dbReference type="RefSeq" id="WP_010897409.1">
    <property type="nucleotide sequence ID" value="NC_002570.2"/>
</dbReference>
<dbReference type="SMR" id="Q9KDH2"/>
<dbReference type="STRING" id="272558.gene:10727135"/>
<dbReference type="KEGG" id="bha:BH1241"/>
<dbReference type="eggNOG" id="COG0503">
    <property type="taxonomic scope" value="Bacteria"/>
</dbReference>
<dbReference type="HOGENOM" id="CLU_063339_3_0_9"/>
<dbReference type="OrthoDB" id="9803963at2"/>
<dbReference type="UniPathway" id="UPA00588">
    <property type="reaction ID" value="UER00646"/>
</dbReference>
<dbReference type="Proteomes" id="UP000001258">
    <property type="component" value="Chromosome"/>
</dbReference>
<dbReference type="GO" id="GO:0005737">
    <property type="term" value="C:cytoplasm"/>
    <property type="evidence" value="ECO:0007669"/>
    <property type="project" value="UniProtKB-SubCell"/>
</dbReference>
<dbReference type="GO" id="GO:0002055">
    <property type="term" value="F:adenine binding"/>
    <property type="evidence" value="ECO:0007669"/>
    <property type="project" value="TreeGrafter"/>
</dbReference>
<dbReference type="GO" id="GO:0003999">
    <property type="term" value="F:adenine phosphoribosyltransferase activity"/>
    <property type="evidence" value="ECO:0007669"/>
    <property type="project" value="UniProtKB-UniRule"/>
</dbReference>
<dbReference type="GO" id="GO:0016208">
    <property type="term" value="F:AMP binding"/>
    <property type="evidence" value="ECO:0007669"/>
    <property type="project" value="TreeGrafter"/>
</dbReference>
<dbReference type="GO" id="GO:0006168">
    <property type="term" value="P:adenine salvage"/>
    <property type="evidence" value="ECO:0007669"/>
    <property type="project" value="InterPro"/>
</dbReference>
<dbReference type="GO" id="GO:0044209">
    <property type="term" value="P:AMP salvage"/>
    <property type="evidence" value="ECO:0007669"/>
    <property type="project" value="UniProtKB-UniRule"/>
</dbReference>
<dbReference type="GO" id="GO:0006166">
    <property type="term" value="P:purine ribonucleoside salvage"/>
    <property type="evidence" value="ECO:0007669"/>
    <property type="project" value="UniProtKB-KW"/>
</dbReference>
<dbReference type="CDD" id="cd06223">
    <property type="entry name" value="PRTases_typeI"/>
    <property type="match status" value="1"/>
</dbReference>
<dbReference type="FunFam" id="3.40.50.2020:FF:000004">
    <property type="entry name" value="Adenine phosphoribosyltransferase"/>
    <property type="match status" value="1"/>
</dbReference>
<dbReference type="Gene3D" id="3.40.50.2020">
    <property type="match status" value="1"/>
</dbReference>
<dbReference type="HAMAP" id="MF_00004">
    <property type="entry name" value="Aden_phosphoribosyltr"/>
    <property type="match status" value="1"/>
</dbReference>
<dbReference type="InterPro" id="IPR005764">
    <property type="entry name" value="Ade_phspho_trans"/>
</dbReference>
<dbReference type="InterPro" id="IPR000836">
    <property type="entry name" value="PRibTrfase_dom"/>
</dbReference>
<dbReference type="InterPro" id="IPR029057">
    <property type="entry name" value="PRTase-like"/>
</dbReference>
<dbReference type="InterPro" id="IPR050054">
    <property type="entry name" value="UPRTase/APRTase"/>
</dbReference>
<dbReference type="NCBIfam" id="TIGR01090">
    <property type="entry name" value="apt"/>
    <property type="match status" value="1"/>
</dbReference>
<dbReference type="NCBIfam" id="NF002633">
    <property type="entry name" value="PRK02304.1-2"/>
    <property type="match status" value="1"/>
</dbReference>
<dbReference type="NCBIfam" id="NF002634">
    <property type="entry name" value="PRK02304.1-3"/>
    <property type="match status" value="1"/>
</dbReference>
<dbReference type="NCBIfam" id="NF002636">
    <property type="entry name" value="PRK02304.1-5"/>
    <property type="match status" value="1"/>
</dbReference>
<dbReference type="PANTHER" id="PTHR32315">
    <property type="entry name" value="ADENINE PHOSPHORIBOSYLTRANSFERASE"/>
    <property type="match status" value="1"/>
</dbReference>
<dbReference type="PANTHER" id="PTHR32315:SF3">
    <property type="entry name" value="ADENINE PHOSPHORIBOSYLTRANSFERASE"/>
    <property type="match status" value="1"/>
</dbReference>
<dbReference type="Pfam" id="PF00156">
    <property type="entry name" value="Pribosyltran"/>
    <property type="match status" value="1"/>
</dbReference>
<dbReference type="SUPFAM" id="SSF53271">
    <property type="entry name" value="PRTase-like"/>
    <property type="match status" value="1"/>
</dbReference>
<proteinExistence type="inferred from homology"/>
<evidence type="ECO:0000255" key="1">
    <source>
        <dbReference type="HAMAP-Rule" id="MF_00004"/>
    </source>
</evidence>
<reference key="1">
    <citation type="journal article" date="2000" name="Nucleic Acids Res.">
        <title>Complete genome sequence of the alkaliphilic bacterium Bacillus halodurans and genomic sequence comparison with Bacillus subtilis.</title>
        <authorList>
            <person name="Takami H."/>
            <person name="Nakasone K."/>
            <person name="Takaki Y."/>
            <person name="Maeno G."/>
            <person name="Sasaki R."/>
            <person name="Masui N."/>
            <person name="Fuji F."/>
            <person name="Hirama C."/>
            <person name="Nakamura Y."/>
            <person name="Ogasawara N."/>
            <person name="Kuhara S."/>
            <person name="Horikoshi K."/>
        </authorList>
    </citation>
    <scope>NUCLEOTIDE SEQUENCE [LARGE SCALE GENOMIC DNA]</scope>
    <source>
        <strain>ATCC BAA-125 / DSM 18197 / FERM 7344 / JCM 9153 / C-125</strain>
    </source>
</reference>
<name>APT_HALH5</name>
<sequence>MDFKQHITIVENFPKEGIRFKDITTLMQNGEVYKRAIDEMARFAKEKEVDLVVGPEARGFVVGCPIAYAIGKGFVPVRKAGKLPREVISVDYGLEYGKDRLTIHRDAIQKGQRVLIADDLLATGGTIEATVQMVEQLGGEVVGIAFMIELGYLNGRDKLVTYDVFSLTTYE</sequence>
<protein>
    <recommendedName>
        <fullName evidence="1">Adenine phosphoribosyltransferase</fullName>
        <shortName evidence="1">APRT</shortName>
        <ecNumber evidence="1">2.4.2.7</ecNumber>
    </recommendedName>
</protein>
<organism>
    <name type="scientific">Halalkalibacterium halodurans (strain ATCC BAA-125 / DSM 18197 / FERM 7344 / JCM 9153 / C-125)</name>
    <name type="common">Bacillus halodurans</name>
    <dbReference type="NCBI Taxonomy" id="272558"/>
    <lineage>
        <taxon>Bacteria</taxon>
        <taxon>Bacillati</taxon>
        <taxon>Bacillota</taxon>
        <taxon>Bacilli</taxon>
        <taxon>Bacillales</taxon>
        <taxon>Bacillaceae</taxon>
        <taxon>Halalkalibacterium (ex Joshi et al. 2022)</taxon>
    </lineage>
</organism>
<gene>
    <name evidence="1" type="primary">apt</name>
    <name type="ordered locus">BH1241</name>
</gene>